<sequence length="275" mass="30238">MGIRFYRAHTPGTRNRSVSDFHEITTSTPTKSLTHANHRARGRNHSGSITTRWRGGGHKRLYRQIDFRRDKVGVLARVATVEYDPNRSARIALLHYQDGSKRYILHPQGLAIGAEVMSSPEAPISIGNALPLVNMPLGTEVHNIELRPYNGGQLVRAAGAVAQLVAKEGGFGTLRMPSGEVRLVAKDCWATVGQVGHVESINLTLGKAGRSRWLDRRPRVRGSVMNACDHPHGGGEGRCPIGHPGPLTPWGKPALGQRTRARKKYSDALLVRRRK</sequence>
<keyword id="KW-0150">Chloroplast</keyword>
<keyword id="KW-0934">Plastid</keyword>
<keyword id="KW-0687">Ribonucleoprotein</keyword>
<keyword id="KW-0689">Ribosomal protein</keyword>
<geneLocation type="chloroplast"/>
<gene>
    <name type="primary">rpl2</name>
</gene>
<dbReference type="EMBL" id="AF137379">
    <property type="protein sequence ID" value="AAD54798.1"/>
    <property type="molecule type" value="Genomic_DNA"/>
</dbReference>
<dbReference type="RefSeq" id="NP_050827.1">
    <property type="nucleotide sequence ID" value="NC_000927.1"/>
</dbReference>
<dbReference type="SMR" id="Q9TL18"/>
<dbReference type="GeneID" id="801994"/>
<dbReference type="GO" id="GO:0009507">
    <property type="term" value="C:chloroplast"/>
    <property type="evidence" value="ECO:0007669"/>
    <property type="project" value="UniProtKB-SubCell"/>
</dbReference>
<dbReference type="GO" id="GO:0005762">
    <property type="term" value="C:mitochondrial large ribosomal subunit"/>
    <property type="evidence" value="ECO:0007669"/>
    <property type="project" value="TreeGrafter"/>
</dbReference>
<dbReference type="GO" id="GO:0019843">
    <property type="term" value="F:rRNA binding"/>
    <property type="evidence" value="ECO:0007669"/>
    <property type="project" value="UniProtKB-UniRule"/>
</dbReference>
<dbReference type="GO" id="GO:0003735">
    <property type="term" value="F:structural constituent of ribosome"/>
    <property type="evidence" value="ECO:0007669"/>
    <property type="project" value="InterPro"/>
</dbReference>
<dbReference type="GO" id="GO:0016740">
    <property type="term" value="F:transferase activity"/>
    <property type="evidence" value="ECO:0007669"/>
    <property type="project" value="InterPro"/>
</dbReference>
<dbReference type="GO" id="GO:0032543">
    <property type="term" value="P:mitochondrial translation"/>
    <property type="evidence" value="ECO:0007669"/>
    <property type="project" value="TreeGrafter"/>
</dbReference>
<dbReference type="FunFam" id="2.30.30.30:FF:000001">
    <property type="entry name" value="50S ribosomal protein L2"/>
    <property type="match status" value="1"/>
</dbReference>
<dbReference type="FunFam" id="2.40.50.140:FF:000003">
    <property type="entry name" value="50S ribosomal protein L2"/>
    <property type="match status" value="1"/>
</dbReference>
<dbReference type="FunFam" id="4.10.950.10:FF:000001">
    <property type="entry name" value="50S ribosomal protein L2"/>
    <property type="match status" value="1"/>
</dbReference>
<dbReference type="Gene3D" id="2.30.30.30">
    <property type="match status" value="1"/>
</dbReference>
<dbReference type="Gene3D" id="2.40.50.140">
    <property type="entry name" value="Nucleic acid-binding proteins"/>
    <property type="match status" value="1"/>
</dbReference>
<dbReference type="Gene3D" id="4.10.950.10">
    <property type="entry name" value="Ribosomal protein L2, domain 3"/>
    <property type="match status" value="1"/>
</dbReference>
<dbReference type="HAMAP" id="MF_01320_B">
    <property type="entry name" value="Ribosomal_uL2_B"/>
    <property type="match status" value="1"/>
</dbReference>
<dbReference type="InterPro" id="IPR012340">
    <property type="entry name" value="NA-bd_OB-fold"/>
</dbReference>
<dbReference type="InterPro" id="IPR014722">
    <property type="entry name" value="Rib_uL2_dom2"/>
</dbReference>
<dbReference type="InterPro" id="IPR002171">
    <property type="entry name" value="Ribosomal_uL2"/>
</dbReference>
<dbReference type="InterPro" id="IPR005880">
    <property type="entry name" value="Ribosomal_uL2_bac/org-type"/>
</dbReference>
<dbReference type="InterPro" id="IPR022669">
    <property type="entry name" value="Ribosomal_uL2_C"/>
</dbReference>
<dbReference type="InterPro" id="IPR022671">
    <property type="entry name" value="Ribosomal_uL2_CS"/>
</dbReference>
<dbReference type="InterPro" id="IPR014726">
    <property type="entry name" value="Ribosomal_uL2_dom3"/>
</dbReference>
<dbReference type="InterPro" id="IPR022666">
    <property type="entry name" value="Ribosomal_uL2_RNA-bd_dom"/>
</dbReference>
<dbReference type="InterPro" id="IPR008991">
    <property type="entry name" value="Translation_prot_SH3-like_sf"/>
</dbReference>
<dbReference type="NCBIfam" id="TIGR01171">
    <property type="entry name" value="rplB_bact"/>
    <property type="match status" value="1"/>
</dbReference>
<dbReference type="PANTHER" id="PTHR13691:SF5">
    <property type="entry name" value="LARGE RIBOSOMAL SUBUNIT PROTEIN UL2M"/>
    <property type="match status" value="1"/>
</dbReference>
<dbReference type="PANTHER" id="PTHR13691">
    <property type="entry name" value="RIBOSOMAL PROTEIN L2"/>
    <property type="match status" value="1"/>
</dbReference>
<dbReference type="Pfam" id="PF00181">
    <property type="entry name" value="Ribosomal_L2"/>
    <property type="match status" value="1"/>
</dbReference>
<dbReference type="Pfam" id="PF03947">
    <property type="entry name" value="Ribosomal_L2_C"/>
    <property type="match status" value="1"/>
</dbReference>
<dbReference type="PIRSF" id="PIRSF002158">
    <property type="entry name" value="Ribosomal_L2"/>
    <property type="match status" value="1"/>
</dbReference>
<dbReference type="SMART" id="SM01383">
    <property type="entry name" value="Ribosomal_L2"/>
    <property type="match status" value="1"/>
</dbReference>
<dbReference type="SMART" id="SM01382">
    <property type="entry name" value="Ribosomal_L2_C"/>
    <property type="match status" value="1"/>
</dbReference>
<dbReference type="SUPFAM" id="SSF50249">
    <property type="entry name" value="Nucleic acid-binding proteins"/>
    <property type="match status" value="1"/>
</dbReference>
<dbReference type="SUPFAM" id="SSF50104">
    <property type="entry name" value="Translation proteins SH3-like domain"/>
    <property type="match status" value="1"/>
</dbReference>
<dbReference type="PROSITE" id="PS00467">
    <property type="entry name" value="RIBOSOMAL_L2"/>
    <property type="match status" value="1"/>
</dbReference>
<name>RK2_NEPOL</name>
<proteinExistence type="inferred from homology"/>
<reference key="1">
    <citation type="journal article" date="1999" name="Proc. Natl. Acad. Sci. U.S.A.">
        <title>The complete chloroplast DNA sequence of the green alga Nephroselmis olivacea: insights into the architecture of ancestral chloroplast genomes.</title>
        <authorList>
            <person name="Turmel M."/>
            <person name="Otis C."/>
            <person name="Lemieux C."/>
        </authorList>
    </citation>
    <scope>NUCLEOTIDE SEQUENCE [LARGE SCALE GENOMIC DNA]</scope>
    <source>
        <strain>NIES-484 / S-N-5-8</strain>
    </source>
</reference>
<accession>Q9TL18</accession>
<feature type="chain" id="PRO_0000129684" description="Large ribosomal subunit protein uL2c">
    <location>
        <begin position="1"/>
        <end position="275"/>
    </location>
</feature>
<feature type="region of interest" description="Disordered" evidence="3">
    <location>
        <begin position="28"/>
        <end position="53"/>
    </location>
</feature>
<comment type="subunit">
    <text evidence="1">Part of the 50S ribosomal subunit.</text>
</comment>
<comment type="subcellular location">
    <subcellularLocation>
        <location>Plastid</location>
        <location>Chloroplast</location>
    </subcellularLocation>
</comment>
<comment type="similarity">
    <text evidence="4">Belongs to the universal ribosomal protein uL2 family.</text>
</comment>
<protein>
    <recommendedName>
        <fullName evidence="2">Large ribosomal subunit protein uL2c</fullName>
    </recommendedName>
    <alternativeName>
        <fullName evidence="4">50S ribosomal protein L2, chloroplastic</fullName>
    </alternativeName>
</protein>
<organism>
    <name type="scientific">Nephroselmis olivacea</name>
    <name type="common">Green alga</name>
    <dbReference type="NCBI Taxonomy" id="31312"/>
    <lineage>
        <taxon>Eukaryota</taxon>
        <taxon>Viridiplantae</taxon>
        <taxon>Chlorophyta</taxon>
        <taxon>Nephroselmidophyceae</taxon>
        <taxon>Nephroselmidales</taxon>
        <taxon>Nephroselmidaceae</taxon>
        <taxon>Nephroselmis</taxon>
    </lineage>
</organism>
<evidence type="ECO:0000250" key="1"/>
<evidence type="ECO:0000255" key="2">
    <source>
        <dbReference type="HAMAP-Rule" id="MF_01320"/>
    </source>
</evidence>
<evidence type="ECO:0000256" key="3">
    <source>
        <dbReference type="SAM" id="MobiDB-lite"/>
    </source>
</evidence>
<evidence type="ECO:0000305" key="4"/>